<name>TMAR_VIBVY</name>
<accession>Q7MD09</accession>
<gene>
    <name evidence="1" type="primary">tmaR</name>
    <name type="ordered locus">VVA1227</name>
</gene>
<evidence type="ECO:0000255" key="1">
    <source>
        <dbReference type="HAMAP-Rule" id="MF_00683"/>
    </source>
</evidence>
<comment type="function">
    <text evidence="1">Pole-localizer protein involved in the regulation of several cellular processes.</text>
</comment>
<comment type="subcellular location">
    <subcellularLocation>
        <location evidence="1">Cytoplasm</location>
    </subcellularLocation>
</comment>
<comment type="similarity">
    <text evidence="1">Belongs to the pole-localizer TmaR family.</text>
</comment>
<organism>
    <name type="scientific">Vibrio vulnificus (strain YJ016)</name>
    <dbReference type="NCBI Taxonomy" id="196600"/>
    <lineage>
        <taxon>Bacteria</taxon>
        <taxon>Pseudomonadati</taxon>
        <taxon>Pseudomonadota</taxon>
        <taxon>Gammaproteobacteria</taxon>
        <taxon>Vibrionales</taxon>
        <taxon>Vibrionaceae</taxon>
        <taxon>Vibrio</taxon>
    </lineage>
</organism>
<feature type="chain" id="PRO_0000072773" description="Pole-localizer protein TmaR">
    <location>
        <begin position="1"/>
        <end position="104"/>
    </location>
</feature>
<feature type="coiled-coil region" evidence="1">
    <location>
        <begin position="13"/>
        <end position="43"/>
    </location>
</feature>
<feature type="coiled-coil region" evidence="1">
    <location>
        <begin position="76"/>
        <end position="96"/>
    </location>
</feature>
<keyword id="KW-0175">Coiled coil</keyword>
<keyword id="KW-0963">Cytoplasm</keyword>
<protein>
    <recommendedName>
        <fullName evidence="1">Pole-localizer protein TmaR</fullName>
    </recommendedName>
</protein>
<dbReference type="EMBL" id="BA000038">
    <property type="protein sequence ID" value="BAC97253.1"/>
    <property type="molecule type" value="Genomic_DNA"/>
</dbReference>
<dbReference type="RefSeq" id="WP_011081685.1">
    <property type="nucleotide sequence ID" value="NC_005140.1"/>
</dbReference>
<dbReference type="SMR" id="Q7MD09"/>
<dbReference type="STRING" id="672.VV93_v1c41520"/>
<dbReference type="KEGG" id="vvy:VVA1227"/>
<dbReference type="eggNOG" id="COG2926">
    <property type="taxonomic scope" value="Bacteria"/>
</dbReference>
<dbReference type="HOGENOM" id="CLU_153146_0_0_6"/>
<dbReference type="Proteomes" id="UP000002675">
    <property type="component" value="Chromosome II"/>
</dbReference>
<dbReference type="GO" id="GO:0005829">
    <property type="term" value="C:cytosol"/>
    <property type="evidence" value="ECO:0007669"/>
    <property type="project" value="TreeGrafter"/>
</dbReference>
<dbReference type="HAMAP" id="MF_00683">
    <property type="entry name" value="Pole_loc_TmaR"/>
    <property type="match status" value="1"/>
</dbReference>
<dbReference type="InterPro" id="IPR007458">
    <property type="entry name" value="DUF496"/>
</dbReference>
<dbReference type="NCBIfam" id="NF003844">
    <property type="entry name" value="PRK05423.1"/>
    <property type="match status" value="1"/>
</dbReference>
<dbReference type="PANTHER" id="PTHR39591">
    <property type="entry name" value="UPF0265 PROTEIN YEEX"/>
    <property type="match status" value="1"/>
</dbReference>
<dbReference type="PANTHER" id="PTHR39591:SF1">
    <property type="entry name" value="UPF0265 PROTEIN YEEX"/>
    <property type="match status" value="1"/>
</dbReference>
<dbReference type="Pfam" id="PF04363">
    <property type="entry name" value="DUF496"/>
    <property type="match status" value="1"/>
</dbReference>
<dbReference type="PIRSF" id="PIRSF028773">
    <property type="entry name" value="UCP028773"/>
    <property type="match status" value="1"/>
</dbReference>
<proteinExistence type="inferred from homology"/>
<reference key="1">
    <citation type="journal article" date="2003" name="Genome Res.">
        <title>Comparative genome analysis of Vibrio vulnificus, a marine pathogen.</title>
        <authorList>
            <person name="Chen C.-Y."/>
            <person name="Wu K.-M."/>
            <person name="Chang Y.-C."/>
            <person name="Chang C.-H."/>
            <person name="Tsai H.-C."/>
            <person name="Liao T.-L."/>
            <person name="Liu Y.-M."/>
            <person name="Chen H.-J."/>
            <person name="Shen A.B.-T."/>
            <person name="Li J.-C."/>
            <person name="Su T.-L."/>
            <person name="Shao C.-P."/>
            <person name="Lee C.-T."/>
            <person name="Hor L.-I."/>
            <person name="Tsai S.-F."/>
        </authorList>
    </citation>
    <scope>NUCLEOTIDE SEQUENCE [LARGE SCALE GENOMIC DNA]</scope>
    <source>
        <strain>YJ016</strain>
    </source>
</reference>
<sequence length="104" mass="12444">MNTVFEIVSQARRKNKLKRELLDNEKKVRDNRKRVELLENLLDYIKPNMSQDEIMTIIKNMKADYEDRVDDHIIKSAEISKARRDISRRIRELTEEDKQASGKK</sequence>